<sequence length="346" mass="38769">MQQEKELVKQKAKELLLDLLSIYTPSKNETNATKFFEKISNEFNLKLEILPDSNSFILGEGEILLASHVDTVPGYIEPKIENEVIYGRGAVDAKGPLISMIIAAWLLNEKGIKVMVSGLADEESTSIGAKELTLKNFNFKHIIVGEPSNGTDIVVEYRGSIQLDIMCESTPEHSSSAKSNLIVDISKKIIEVYKQPENYDKPSIVPTIIRAGESYNVTPAKLYLHFDVRYAINNKRDDLINEIKDKFQECGLKIVDETPPVKVSINNPVVKSLTRALLKQNIKPRLVRKAGTSDMNILQKITTSIATYGPGNSMLEHTNQEKITLDEIYIGVKTYMLAIEELWQKS</sequence>
<proteinExistence type="inferred from homology"/>
<accession>C3MJ44</accession>
<protein>
    <recommendedName>
        <fullName evidence="1">[LysW]-lysine/[LysW]-ornithine hydrolase</fullName>
        <ecNumber evidence="1">3.5.1.130</ecNumber>
        <ecNumber evidence="1">3.5.1.132</ecNumber>
    </recommendedName>
</protein>
<keyword id="KW-0028">Amino-acid biosynthesis</keyword>
<keyword id="KW-0055">Arginine biosynthesis</keyword>
<keyword id="KW-0170">Cobalt</keyword>
<keyword id="KW-0963">Cytoplasm</keyword>
<keyword id="KW-0378">Hydrolase</keyword>
<keyword id="KW-0457">Lysine biosynthesis</keyword>
<keyword id="KW-0479">Metal-binding</keyword>
<keyword id="KW-0862">Zinc</keyword>
<evidence type="ECO:0000255" key="1">
    <source>
        <dbReference type="HAMAP-Rule" id="MF_01120"/>
    </source>
</evidence>
<feature type="chain" id="PRO_1000213615" description="[LysW]-lysine/[LysW]-ornithine hydrolase">
    <location>
        <begin position="1"/>
        <end position="346"/>
    </location>
</feature>
<feature type="active site" evidence="1">
    <location>
        <position position="70"/>
    </location>
</feature>
<feature type="active site" description="Proton acceptor" evidence="1">
    <location>
        <position position="122"/>
    </location>
</feature>
<feature type="binding site" evidence="1">
    <location>
        <position position="68"/>
    </location>
    <ligand>
        <name>Zn(2+)</name>
        <dbReference type="ChEBI" id="CHEBI:29105"/>
        <label>1</label>
    </ligand>
</feature>
<feature type="binding site" evidence="1">
    <location>
        <position position="92"/>
    </location>
    <ligand>
        <name>Zn(2+)</name>
        <dbReference type="ChEBI" id="CHEBI:29105"/>
        <label>1</label>
    </ligand>
</feature>
<feature type="binding site" evidence="1">
    <location>
        <position position="92"/>
    </location>
    <ligand>
        <name>Zn(2+)</name>
        <dbReference type="ChEBI" id="CHEBI:29105"/>
        <label>2</label>
    </ligand>
</feature>
<feature type="binding site" evidence="1">
    <location>
        <position position="123"/>
    </location>
    <ligand>
        <name>Zn(2+)</name>
        <dbReference type="ChEBI" id="CHEBI:29105"/>
        <label>2</label>
    </ligand>
</feature>
<feature type="binding site" evidence="1">
    <location>
        <position position="146"/>
    </location>
    <ligand>
        <name>Zn(2+)</name>
        <dbReference type="ChEBI" id="CHEBI:29105"/>
        <label>1</label>
    </ligand>
</feature>
<feature type="binding site" evidence="1">
    <location>
        <position position="317"/>
    </location>
    <ligand>
        <name>Zn(2+)</name>
        <dbReference type="ChEBI" id="CHEBI:29105"/>
        <label>2</label>
    </ligand>
</feature>
<reference key="1">
    <citation type="journal article" date="2009" name="Proc. Natl. Acad. Sci. U.S.A.">
        <title>Biogeography of the Sulfolobus islandicus pan-genome.</title>
        <authorList>
            <person name="Reno M.L."/>
            <person name="Held N.L."/>
            <person name="Fields C.J."/>
            <person name="Burke P.V."/>
            <person name="Whitaker R.J."/>
        </authorList>
    </citation>
    <scope>NUCLEOTIDE SEQUENCE [LARGE SCALE GENOMIC DNA]</scope>
    <source>
        <strain>L.S.2.15 / Lassen #1</strain>
    </source>
</reference>
<comment type="function">
    <text evidence="1">Catalyzes the release of L-lysine from [LysW]-gamma-L-lysine and the release of L-ornithine from [LysW]-L-ornithine.</text>
</comment>
<comment type="catalytic activity">
    <reaction evidence="1">
        <text>[amino-group carrier protein]-C-terminal-gamma-(L-lysyl)-L-glutamate + H2O = [amino-group carrier protein]-C-terminal-L-glutamate + L-lysine</text>
        <dbReference type="Rhea" id="RHEA:48684"/>
        <dbReference type="Rhea" id="RHEA-COMP:9693"/>
        <dbReference type="Rhea" id="RHEA-COMP:9715"/>
        <dbReference type="ChEBI" id="CHEBI:15377"/>
        <dbReference type="ChEBI" id="CHEBI:32551"/>
        <dbReference type="ChEBI" id="CHEBI:78525"/>
        <dbReference type="ChEBI" id="CHEBI:78526"/>
        <dbReference type="EC" id="3.5.1.130"/>
    </reaction>
</comment>
<comment type="catalytic activity">
    <reaction evidence="1">
        <text>[amino-group carrier protein]-C-terminal-gamma-(L-ornithyl)-L-glutamate + H2O = [amino-group carrier protein]-C-terminal-L-glutamate + L-ornithine</text>
        <dbReference type="Rhea" id="RHEA:52676"/>
        <dbReference type="Rhea" id="RHEA-COMP:9693"/>
        <dbReference type="Rhea" id="RHEA-COMP:13328"/>
        <dbReference type="ChEBI" id="CHEBI:15377"/>
        <dbReference type="ChEBI" id="CHEBI:46911"/>
        <dbReference type="ChEBI" id="CHEBI:78525"/>
        <dbReference type="ChEBI" id="CHEBI:136763"/>
        <dbReference type="EC" id="3.5.1.132"/>
    </reaction>
</comment>
<comment type="cofactor">
    <cofactor evidence="1">
        <name>Zn(2+)</name>
        <dbReference type="ChEBI" id="CHEBI:29105"/>
    </cofactor>
    <cofactor evidence="1">
        <name>Co(2+)</name>
        <dbReference type="ChEBI" id="CHEBI:48828"/>
    </cofactor>
    <text evidence="1">Binds 2 Zn(2+) or Co(2+) ions per subunit.</text>
</comment>
<comment type="pathway">
    <text evidence="1">Amino-acid biosynthesis; L-lysine biosynthesis via AAA pathway; L-lysine from L-alpha-aminoadipate (Thermus route): step 5/5.</text>
</comment>
<comment type="pathway">
    <text evidence="1">Amino-acid biosynthesis; L-arginine biosynthesis.</text>
</comment>
<comment type="subcellular location">
    <subcellularLocation>
        <location evidence="1">Cytoplasm</location>
    </subcellularLocation>
</comment>
<comment type="similarity">
    <text evidence="1">Belongs to the peptidase M20A family. LysK subfamily.</text>
</comment>
<gene>
    <name evidence="1" type="primary">lysK</name>
    <name type="ordered locus">LS215_2143</name>
</gene>
<name>LYSK_SACI2</name>
<dbReference type="EC" id="3.5.1.130" evidence="1"/>
<dbReference type="EC" id="3.5.1.132" evidence="1"/>
<dbReference type="EMBL" id="CP001399">
    <property type="protein sequence ID" value="ACP36131.1"/>
    <property type="molecule type" value="Genomic_DNA"/>
</dbReference>
<dbReference type="RefSeq" id="WP_012711946.1">
    <property type="nucleotide sequence ID" value="NC_012589.1"/>
</dbReference>
<dbReference type="SMR" id="C3MJ44"/>
<dbReference type="MEROPS" id="M20.975"/>
<dbReference type="GeneID" id="15298361"/>
<dbReference type="KEGG" id="sis:LS215_2143"/>
<dbReference type="HOGENOM" id="CLU_021802_2_0_2"/>
<dbReference type="OrthoDB" id="133929at2157"/>
<dbReference type="UniPathway" id="UPA00033">
    <property type="reaction ID" value="UER00039"/>
</dbReference>
<dbReference type="UniPathway" id="UPA00068"/>
<dbReference type="Proteomes" id="UP000001747">
    <property type="component" value="Chromosome"/>
</dbReference>
<dbReference type="GO" id="GO:0005737">
    <property type="term" value="C:cytoplasm"/>
    <property type="evidence" value="ECO:0007669"/>
    <property type="project" value="UniProtKB-SubCell"/>
</dbReference>
<dbReference type="GO" id="GO:0050897">
    <property type="term" value="F:cobalt ion binding"/>
    <property type="evidence" value="ECO:0007669"/>
    <property type="project" value="UniProtKB-UniRule"/>
</dbReference>
<dbReference type="GO" id="GO:0016811">
    <property type="term" value="F:hydrolase activity, acting on carbon-nitrogen (but not peptide) bonds, in linear amides"/>
    <property type="evidence" value="ECO:0007669"/>
    <property type="project" value="UniProtKB-UniRule"/>
</dbReference>
<dbReference type="GO" id="GO:0008270">
    <property type="term" value="F:zinc ion binding"/>
    <property type="evidence" value="ECO:0007669"/>
    <property type="project" value="UniProtKB-UniRule"/>
</dbReference>
<dbReference type="GO" id="GO:0042450">
    <property type="term" value="P:arginine biosynthetic process via ornithine"/>
    <property type="evidence" value="ECO:0007669"/>
    <property type="project" value="UniProtKB-UniRule"/>
</dbReference>
<dbReference type="GO" id="GO:0006526">
    <property type="term" value="P:L-arginine biosynthetic process"/>
    <property type="evidence" value="ECO:0007669"/>
    <property type="project" value="UniProtKB-UniPathway"/>
</dbReference>
<dbReference type="GO" id="GO:0019878">
    <property type="term" value="P:lysine biosynthetic process via aminoadipic acid"/>
    <property type="evidence" value="ECO:0007669"/>
    <property type="project" value="UniProtKB-UniRule"/>
</dbReference>
<dbReference type="CDD" id="cd05653">
    <property type="entry name" value="M20_ArgE_LysK"/>
    <property type="match status" value="1"/>
</dbReference>
<dbReference type="Gene3D" id="3.30.70.360">
    <property type="match status" value="1"/>
</dbReference>
<dbReference type="Gene3D" id="3.40.630.10">
    <property type="entry name" value="Zn peptidases"/>
    <property type="match status" value="1"/>
</dbReference>
<dbReference type="HAMAP" id="MF_01120">
    <property type="entry name" value="LysK"/>
    <property type="match status" value="1"/>
</dbReference>
<dbReference type="InterPro" id="IPR001261">
    <property type="entry name" value="ArgE/DapE_CS"/>
</dbReference>
<dbReference type="InterPro" id="IPR036264">
    <property type="entry name" value="Bact_exopeptidase_dim_dom"/>
</dbReference>
<dbReference type="InterPro" id="IPR010175">
    <property type="entry name" value="LysK"/>
</dbReference>
<dbReference type="InterPro" id="IPR002933">
    <property type="entry name" value="Peptidase_M20"/>
</dbReference>
<dbReference type="InterPro" id="IPR011650">
    <property type="entry name" value="Peptidase_M20_dimer"/>
</dbReference>
<dbReference type="InterPro" id="IPR050072">
    <property type="entry name" value="Peptidase_M20A"/>
</dbReference>
<dbReference type="NCBIfam" id="TIGR01902">
    <property type="entry name" value="dapE-lys-deAc"/>
    <property type="match status" value="1"/>
</dbReference>
<dbReference type="NCBIfam" id="NF001747">
    <property type="entry name" value="PRK00466.1"/>
    <property type="match status" value="1"/>
</dbReference>
<dbReference type="PANTHER" id="PTHR43808:SF28">
    <property type="entry name" value="[LYSW]-LYSINE_[LYSW]-ORNITHINE HYDROLASE"/>
    <property type="match status" value="1"/>
</dbReference>
<dbReference type="PANTHER" id="PTHR43808">
    <property type="entry name" value="ACETYLORNITHINE DEACETYLASE"/>
    <property type="match status" value="1"/>
</dbReference>
<dbReference type="Pfam" id="PF07687">
    <property type="entry name" value="M20_dimer"/>
    <property type="match status" value="1"/>
</dbReference>
<dbReference type="Pfam" id="PF01546">
    <property type="entry name" value="Peptidase_M20"/>
    <property type="match status" value="1"/>
</dbReference>
<dbReference type="SUPFAM" id="SSF55031">
    <property type="entry name" value="Bacterial exopeptidase dimerisation domain"/>
    <property type="match status" value="1"/>
</dbReference>
<dbReference type="SUPFAM" id="SSF53187">
    <property type="entry name" value="Zn-dependent exopeptidases"/>
    <property type="match status" value="1"/>
</dbReference>
<dbReference type="PROSITE" id="PS00758">
    <property type="entry name" value="ARGE_DAPE_CPG2_1"/>
    <property type="match status" value="1"/>
</dbReference>
<organism>
    <name type="scientific">Saccharolobus islandicus (strain L.S.2.15 / Lassen #1)</name>
    <name type="common">Sulfolobus islandicus</name>
    <dbReference type="NCBI Taxonomy" id="429572"/>
    <lineage>
        <taxon>Archaea</taxon>
        <taxon>Thermoproteota</taxon>
        <taxon>Thermoprotei</taxon>
        <taxon>Sulfolobales</taxon>
        <taxon>Sulfolobaceae</taxon>
        <taxon>Saccharolobus</taxon>
    </lineage>
</organism>